<keyword id="KW-1003">Cell membrane</keyword>
<keyword id="KW-0963">Cytoplasm</keyword>
<keyword id="KW-0342">GTP-binding</keyword>
<keyword id="KW-0472">Membrane</keyword>
<keyword id="KW-0547">Nucleotide-binding</keyword>
<keyword id="KW-1185">Reference proteome</keyword>
<keyword id="KW-0690">Ribosome biogenesis</keyword>
<keyword id="KW-0694">RNA-binding</keyword>
<keyword id="KW-0699">rRNA-binding</keyword>
<evidence type="ECO:0000255" key="1">
    <source>
        <dbReference type="HAMAP-Rule" id="MF_00367"/>
    </source>
</evidence>
<evidence type="ECO:0000255" key="2">
    <source>
        <dbReference type="PROSITE-ProRule" id="PRU01050"/>
    </source>
</evidence>
<dbReference type="EMBL" id="BA000016">
    <property type="protein sequence ID" value="BAB81721.1"/>
    <property type="molecule type" value="Genomic_DNA"/>
</dbReference>
<dbReference type="RefSeq" id="WP_011010725.1">
    <property type="nucleotide sequence ID" value="NC_003366.1"/>
</dbReference>
<dbReference type="SMR" id="Q8XIU8"/>
<dbReference type="STRING" id="195102.gene:10491285"/>
<dbReference type="KEGG" id="cpe:CPE2015"/>
<dbReference type="HOGENOM" id="CLU_038009_1_0_9"/>
<dbReference type="Proteomes" id="UP000000818">
    <property type="component" value="Chromosome"/>
</dbReference>
<dbReference type="GO" id="GO:0005829">
    <property type="term" value="C:cytosol"/>
    <property type="evidence" value="ECO:0007669"/>
    <property type="project" value="TreeGrafter"/>
</dbReference>
<dbReference type="GO" id="GO:0005886">
    <property type="term" value="C:plasma membrane"/>
    <property type="evidence" value="ECO:0007669"/>
    <property type="project" value="UniProtKB-SubCell"/>
</dbReference>
<dbReference type="GO" id="GO:0005525">
    <property type="term" value="F:GTP binding"/>
    <property type="evidence" value="ECO:0007669"/>
    <property type="project" value="UniProtKB-UniRule"/>
</dbReference>
<dbReference type="GO" id="GO:0003924">
    <property type="term" value="F:GTPase activity"/>
    <property type="evidence" value="ECO:0007669"/>
    <property type="project" value="UniProtKB-UniRule"/>
</dbReference>
<dbReference type="GO" id="GO:0043024">
    <property type="term" value="F:ribosomal small subunit binding"/>
    <property type="evidence" value="ECO:0007669"/>
    <property type="project" value="TreeGrafter"/>
</dbReference>
<dbReference type="GO" id="GO:0070181">
    <property type="term" value="F:small ribosomal subunit rRNA binding"/>
    <property type="evidence" value="ECO:0007669"/>
    <property type="project" value="UniProtKB-UniRule"/>
</dbReference>
<dbReference type="GO" id="GO:0000028">
    <property type="term" value="P:ribosomal small subunit assembly"/>
    <property type="evidence" value="ECO:0007669"/>
    <property type="project" value="TreeGrafter"/>
</dbReference>
<dbReference type="CDD" id="cd04163">
    <property type="entry name" value="Era"/>
    <property type="match status" value="1"/>
</dbReference>
<dbReference type="CDD" id="cd22534">
    <property type="entry name" value="KH-II_Era"/>
    <property type="match status" value="1"/>
</dbReference>
<dbReference type="FunFam" id="3.40.50.300:FF:000094">
    <property type="entry name" value="GTPase Era"/>
    <property type="match status" value="1"/>
</dbReference>
<dbReference type="Gene3D" id="3.30.300.20">
    <property type="match status" value="1"/>
</dbReference>
<dbReference type="Gene3D" id="3.40.50.300">
    <property type="entry name" value="P-loop containing nucleotide triphosphate hydrolases"/>
    <property type="match status" value="1"/>
</dbReference>
<dbReference type="HAMAP" id="MF_00367">
    <property type="entry name" value="GTPase_Era"/>
    <property type="match status" value="1"/>
</dbReference>
<dbReference type="InterPro" id="IPR030388">
    <property type="entry name" value="G_ERA_dom"/>
</dbReference>
<dbReference type="InterPro" id="IPR006073">
    <property type="entry name" value="GTP-bd"/>
</dbReference>
<dbReference type="InterPro" id="IPR005662">
    <property type="entry name" value="GTPase_Era-like"/>
</dbReference>
<dbReference type="InterPro" id="IPR015946">
    <property type="entry name" value="KH_dom-like_a/b"/>
</dbReference>
<dbReference type="InterPro" id="IPR004044">
    <property type="entry name" value="KH_dom_type_2"/>
</dbReference>
<dbReference type="InterPro" id="IPR009019">
    <property type="entry name" value="KH_sf_prok-type"/>
</dbReference>
<dbReference type="InterPro" id="IPR027417">
    <property type="entry name" value="P-loop_NTPase"/>
</dbReference>
<dbReference type="InterPro" id="IPR005225">
    <property type="entry name" value="Small_GTP-bd"/>
</dbReference>
<dbReference type="NCBIfam" id="TIGR00436">
    <property type="entry name" value="era"/>
    <property type="match status" value="1"/>
</dbReference>
<dbReference type="NCBIfam" id="NF000908">
    <property type="entry name" value="PRK00089.1"/>
    <property type="match status" value="1"/>
</dbReference>
<dbReference type="NCBIfam" id="TIGR00231">
    <property type="entry name" value="small_GTP"/>
    <property type="match status" value="1"/>
</dbReference>
<dbReference type="PANTHER" id="PTHR42698">
    <property type="entry name" value="GTPASE ERA"/>
    <property type="match status" value="1"/>
</dbReference>
<dbReference type="PANTHER" id="PTHR42698:SF1">
    <property type="entry name" value="GTPASE ERA, MITOCHONDRIAL"/>
    <property type="match status" value="1"/>
</dbReference>
<dbReference type="Pfam" id="PF07650">
    <property type="entry name" value="KH_2"/>
    <property type="match status" value="1"/>
</dbReference>
<dbReference type="Pfam" id="PF01926">
    <property type="entry name" value="MMR_HSR1"/>
    <property type="match status" value="1"/>
</dbReference>
<dbReference type="SUPFAM" id="SSF52540">
    <property type="entry name" value="P-loop containing nucleoside triphosphate hydrolases"/>
    <property type="match status" value="1"/>
</dbReference>
<dbReference type="SUPFAM" id="SSF54814">
    <property type="entry name" value="Prokaryotic type KH domain (KH-domain type II)"/>
    <property type="match status" value="1"/>
</dbReference>
<dbReference type="PROSITE" id="PS51713">
    <property type="entry name" value="G_ERA"/>
    <property type="match status" value="1"/>
</dbReference>
<dbReference type="PROSITE" id="PS50823">
    <property type="entry name" value="KH_TYPE_2"/>
    <property type="match status" value="1"/>
</dbReference>
<feature type="chain" id="PRO_0000180008" description="GTPase Era">
    <location>
        <begin position="1"/>
        <end position="296"/>
    </location>
</feature>
<feature type="domain" description="Era-type G" evidence="2">
    <location>
        <begin position="3"/>
        <end position="170"/>
    </location>
</feature>
<feature type="domain" description="KH type-2" evidence="1">
    <location>
        <begin position="201"/>
        <end position="278"/>
    </location>
</feature>
<feature type="region of interest" description="G1" evidence="2">
    <location>
        <begin position="11"/>
        <end position="18"/>
    </location>
</feature>
<feature type="region of interest" description="G2" evidence="2">
    <location>
        <begin position="37"/>
        <end position="41"/>
    </location>
</feature>
<feature type="region of interest" description="G3" evidence="2">
    <location>
        <begin position="58"/>
        <end position="61"/>
    </location>
</feature>
<feature type="region of interest" description="G4" evidence="2">
    <location>
        <begin position="120"/>
        <end position="123"/>
    </location>
</feature>
<feature type="region of interest" description="G5" evidence="2">
    <location>
        <begin position="149"/>
        <end position="151"/>
    </location>
</feature>
<feature type="binding site" evidence="1">
    <location>
        <begin position="11"/>
        <end position="18"/>
    </location>
    <ligand>
        <name>GTP</name>
        <dbReference type="ChEBI" id="CHEBI:37565"/>
    </ligand>
</feature>
<feature type="binding site" evidence="1">
    <location>
        <begin position="58"/>
        <end position="62"/>
    </location>
    <ligand>
        <name>GTP</name>
        <dbReference type="ChEBI" id="CHEBI:37565"/>
    </ligand>
</feature>
<feature type="binding site" evidence="1">
    <location>
        <begin position="120"/>
        <end position="123"/>
    </location>
    <ligand>
        <name>GTP</name>
        <dbReference type="ChEBI" id="CHEBI:37565"/>
    </ligand>
</feature>
<organism>
    <name type="scientific">Clostridium perfringens (strain 13 / Type A)</name>
    <dbReference type="NCBI Taxonomy" id="195102"/>
    <lineage>
        <taxon>Bacteria</taxon>
        <taxon>Bacillati</taxon>
        <taxon>Bacillota</taxon>
        <taxon>Clostridia</taxon>
        <taxon>Eubacteriales</taxon>
        <taxon>Clostridiaceae</taxon>
        <taxon>Clostridium</taxon>
    </lineage>
</organism>
<proteinExistence type="inferred from homology"/>
<sequence>MFKSGFITIVGRPNVGKSTLTNLLMGEKLSIVSNKPQTTRNNIQTILTGDDYQMIFVDTPGIHKPKHKLGEYMVNSATDSIKDVDLVLFLSNPCEEVGRGDKFIVEQLKNQKAPVIFVLNKVDESSPEKVAKTLELFSKEYDFAEMIPISAMKAKNTDKLLELMVKYLPEGPKYYPDDMITDVQERFVVAEIVREKALKNLSQEVPHGIAVDVIQMKQDDNGKYNIEVDLICEKASHKGIIIGKNGQTLKKIGSTARYELERFLRAKVNIKIWVKVRKEWRDNTSLLKELGYKKLK</sequence>
<protein>
    <recommendedName>
        <fullName evidence="1">GTPase Era</fullName>
    </recommendedName>
</protein>
<accession>Q8XIU8</accession>
<name>ERA_CLOPE</name>
<gene>
    <name evidence="1" type="primary">era</name>
    <name type="ordered locus">CPE2015</name>
</gene>
<comment type="function">
    <text evidence="1">An essential GTPase that binds both GDP and GTP, with rapid nucleotide exchange. Plays a role in 16S rRNA processing and 30S ribosomal subunit biogenesis and possibly also in cell cycle regulation and energy metabolism.</text>
</comment>
<comment type="subunit">
    <text evidence="1">Monomer.</text>
</comment>
<comment type="subcellular location">
    <subcellularLocation>
        <location>Cytoplasm</location>
    </subcellularLocation>
    <subcellularLocation>
        <location evidence="1">Cell membrane</location>
        <topology evidence="1">Peripheral membrane protein</topology>
    </subcellularLocation>
</comment>
<comment type="similarity">
    <text evidence="1 2">Belongs to the TRAFAC class TrmE-Era-EngA-EngB-Septin-like GTPase superfamily. Era GTPase family.</text>
</comment>
<reference key="1">
    <citation type="journal article" date="2002" name="Proc. Natl. Acad. Sci. U.S.A.">
        <title>Complete genome sequence of Clostridium perfringens, an anaerobic flesh-eater.</title>
        <authorList>
            <person name="Shimizu T."/>
            <person name="Ohtani K."/>
            <person name="Hirakawa H."/>
            <person name="Ohshima K."/>
            <person name="Yamashita A."/>
            <person name="Shiba T."/>
            <person name="Ogasawara N."/>
            <person name="Hattori M."/>
            <person name="Kuhara S."/>
            <person name="Hayashi H."/>
        </authorList>
    </citation>
    <scope>NUCLEOTIDE SEQUENCE [LARGE SCALE GENOMIC DNA]</scope>
    <source>
        <strain>13 / Type A</strain>
    </source>
</reference>